<evidence type="ECO:0000255" key="1">
    <source>
        <dbReference type="HAMAP-Rule" id="MF_01643"/>
    </source>
</evidence>
<name>PURT_VIBPA</name>
<feature type="chain" id="PRO_0000319259" description="Formate-dependent phosphoribosylglycinamide formyltransferase">
    <location>
        <begin position="1"/>
        <end position="391"/>
    </location>
</feature>
<feature type="domain" description="ATP-grasp" evidence="1">
    <location>
        <begin position="117"/>
        <end position="306"/>
    </location>
</feature>
<feature type="binding site" evidence="1">
    <location>
        <begin position="20"/>
        <end position="21"/>
    </location>
    <ligand>
        <name>N(1)-(5-phospho-beta-D-ribosyl)glycinamide</name>
        <dbReference type="ChEBI" id="CHEBI:143788"/>
    </ligand>
</feature>
<feature type="binding site" evidence="1">
    <location>
        <position position="80"/>
    </location>
    <ligand>
        <name>N(1)-(5-phospho-beta-D-ribosyl)glycinamide</name>
        <dbReference type="ChEBI" id="CHEBI:143788"/>
    </ligand>
</feature>
<feature type="binding site" evidence="1">
    <location>
        <position position="112"/>
    </location>
    <ligand>
        <name>ATP</name>
        <dbReference type="ChEBI" id="CHEBI:30616"/>
    </ligand>
</feature>
<feature type="binding site" evidence="1">
    <location>
        <position position="153"/>
    </location>
    <ligand>
        <name>ATP</name>
        <dbReference type="ChEBI" id="CHEBI:30616"/>
    </ligand>
</feature>
<feature type="binding site" evidence="1">
    <location>
        <begin position="158"/>
        <end position="163"/>
    </location>
    <ligand>
        <name>ATP</name>
        <dbReference type="ChEBI" id="CHEBI:30616"/>
    </ligand>
</feature>
<feature type="binding site" evidence="1">
    <location>
        <begin position="193"/>
        <end position="196"/>
    </location>
    <ligand>
        <name>ATP</name>
        <dbReference type="ChEBI" id="CHEBI:30616"/>
    </ligand>
</feature>
<feature type="binding site" evidence="1">
    <location>
        <position position="201"/>
    </location>
    <ligand>
        <name>ATP</name>
        <dbReference type="ChEBI" id="CHEBI:30616"/>
    </ligand>
</feature>
<feature type="binding site" evidence="1">
    <location>
        <position position="265"/>
    </location>
    <ligand>
        <name>Mg(2+)</name>
        <dbReference type="ChEBI" id="CHEBI:18420"/>
    </ligand>
</feature>
<feature type="binding site" evidence="1">
    <location>
        <position position="277"/>
    </location>
    <ligand>
        <name>Mg(2+)</name>
        <dbReference type="ChEBI" id="CHEBI:18420"/>
    </ligand>
</feature>
<feature type="binding site" evidence="1">
    <location>
        <position position="284"/>
    </location>
    <ligand>
        <name>N(1)-(5-phospho-beta-D-ribosyl)glycinamide</name>
        <dbReference type="ChEBI" id="CHEBI:143788"/>
    </ligand>
</feature>
<feature type="binding site" evidence="1">
    <location>
        <position position="354"/>
    </location>
    <ligand>
        <name>N(1)-(5-phospho-beta-D-ribosyl)glycinamide</name>
        <dbReference type="ChEBI" id="CHEBI:143788"/>
    </ligand>
</feature>
<feature type="binding site" evidence="1">
    <location>
        <begin position="361"/>
        <end position="362"/>
    </location>
    <ligand>
        <name>N(1)-(5-phospho-beta-D-ribosyl)glycinamide</name>
        <dbReference type="ChEBI" id="CHEBI:143788"/>
    </ligand>
</feature>
<gene>
    <name evidence="1" type="primary">purT</name>
    <name type="ordered locus">VP1297</name>
</gene>
<accession>Q87Q53</accession>
<sequence length="391" mass="42891">MFGTATSANATRVLLLGSGELGKEVAIECQRLGLEVIACDRYADAPAMQVAHRSYVLDMLDGKALEEIINKEQPAYVVPEIEAIATDKLVDLEEKGLNVVPTAKATKLTMNREGIRRLAAEELDLSTSPYRFADNYDDFKAAVEHVGIPCVVKPVMSSSGKGQSVIKTEDDIEKAWDYAQEGGRTGAGRVIVEGFIDFDYEITLLTVRAVDGVHFCAPIGHRQEDGDYRESWQPQAMSENAIKAAEYTAEKVVNALSGYGIFGVELFVKGDKVIFNEVSPRPHDTGMVTMISQEMSEFALHVRAFTGMPINKIVQYGPSASAVILGQGTSTDIRFDNLAKALAQPQTQVRLFGKPEIDGRRRLGVVLTRRKTIEESVQDAVENAKKVKIVY</sequence>
<reference key="1">
    <citation type="journal article" date="2003" name="Lancet">
        <title>Genome sequence of Vibrio parahaemolyticus: a pathogenic mechanism distinct from that of V. cholerae.</title>
        <authorList>
            <person name="Makino K."/>
            <person name="Oshima K."/>
            <person name="Kurokawa K."/>
            <person name="Yokoyama K."/>
            <person name="Uda T."/>
            <person name="Tagomori K."/>
            <person name="Iijima Y."/>
            <person name="Najima M."/>
            <person name="Nakano M."/>
            <person name="Yamashita A."/>
            <person name="Kubota Y."/>
            <person name="Kimura S."/>
            <person name="Yasunaga T."/>
            <person name="Honda T."/>
            <person name="Shinagawa H."/>
            <person name="Hattori M."/>
            <person name="Iida T."/>
        </authorList>
    </citation>
    <scope>NUCLEOTIDE SEQUENCE [LARGE SCALE GENOMIC DNA]</scope>
    <source>
        <strain>RIMD 2210633</strain>
    </source>
</reference>
<keyword id="KW-0067">ATP-binding</keyword>
<keyword id="KW-0436">Ligase</keyword>
<keyword id="KW-0460">Magnesium</keyword>
<keyword id="KW-0479">Metal-binding</keyword>
<keyword id="KW-0547">Nucleotide-binding</keyword>
<keyword id="KW-0658">Purine biosynthesis</keyword>
<comment type="function">
    <text evidence="1">Involved in the de novo purine biosynthesis. Catalyzes the transfer of formate to 5-phospho-ribosyl-glycinamide (GAR), producing 5-phospho-ribosyl-N-formylglycinamide (FGAR). Formate is provided by PurU via hydrolysis of 10-formyl-tetrahydrofolate.</text>
</comment>
<comment type="catalytic activity">
    <reaction evidence="1">
        <text>N(1)-(5-phospho-beta-D-ribosyl)glycinamide + formate + ATP = N(2)-formyl-N(1)-(5-phospho-beta-D-ribosyl)glycinamide + ADP + phosphate + H(+)</text>
        <dbReference type="Rhea" id="RHEA:24829"/>
        <dbReference type="ChEBI" id="CHEBI:15378"/>
        <dbReference type="ChEBI" id="CHEBI:15740"/>
        <dbReference type="ChEBI" id="CHEBI:30616"/>
        <dbReference type="ChEBI" id="CHEBI:43474"/>
        <dbReference type="ChEBI" id="CHEBI:143788"/>
        <dbReference type="ChEBI" id="CHEBI:147286"/>
        <dbReference type="ChEBI" id="CHEBI:456216"/>
        <dbReference type="EC" id="6.3.1.21"/>
    </reaction>
    <physiologicalReaction direction="left-to-right" evidence="1">
        <dbReference type="Rhea" id="RHEA:24830"/>
    </physiologicalReaction>
</comment>
<comment type="pathway">
    <text evidence="1">Purine metabolism; IMP biosynthesis via de novo pathway; N(2)-formyl-N(1)-(5-phospho-D-ribosyl)glycinamide from N(1)-(5-phospho-D-ribosyl)glycinamide (formate route): step 1/1.</text>
</comment>
<comment type="subunit">
    <text evidence="1">Homodimer.</text>
</comment>
<comment type="similarity">
    <text evidence="1">Belongs to the PurK/PurT family.</text>
</comment>
<proteinExistence type="inferred from homology"/>
<organism>
    <name type="scientific">Vibrio parahaemolyticus serotype O3:K6 (strain RIMD 2210633)</name>
    <dbReference type="NCBI Taxonomy" id="223926"/>
    <lineage>
        <taxon>Bacteria</taxon>
        <taxon>Pseudomonadati</taxon>
        <taxon>Pseudomonadota</taxon>
        <taxon>Gammaproteobacteria</taxon>
        <taxon>Vibrionales</taxon>
        <taxon>Vibrionaceae</taxon>
        <taxon>Vibrio</taxon>
    </lineage>
</organism>
<dbReference type="EC" id="6.3.1.21" evidence="1"/>
<dbReference type="EMBL" id="BA000031">
    <property type="protein sequence ID" value="BAC59560.1"/>
    <property type="molecule type" value="Genomic_DNA"/>
</dbReference>
<dbReference type="RefSeq" id="NP_797676.1">
    <property type="nucleotide sequence ID" value="NC_004603.1"/>
</dbReference>
<dbReference type="RefSeq" id="WP_005480612.1">
    <property type="nucleotide sequence ID" value="NC_004603.1"/>
</dbReference>
<dbReference type="SMR" id="Q87Q53"/>
<dbReference type="GeneID" id="1188802"/>
<dbReference type="KEGG" id="vpa:VP1297"/>
<dbReference type="PATRIC" id="fig|223926.6.peg.1237"/>
<dbReference type="eggNOG" id="COG0027">
    <property type="taxonomic scope" value="Bacteria"/>
</dbReference>
<dbReference type="HOGENOM" id="CLU_011534_1_3_6"/>
<dbReference type="UniPathway" id="UPA00074">
    <property type="reaction ID" value="UER00127"/>
</dbReference>
<dbReference type="Proteomes" id="UP000002493">
    <property type="component" value="Chromosome 1"/>
</dbReference>
<dbReference type="GO" id="GO:0005829">
    <property type="term" value="C:cytosol"/>
    <property type="evidence" value="ECO:0007669"/>
    <property type="project" value="TreeGrafter"/>
</dbReference>
<dbReference type="GO" id="GO:0005524">
    <property type="term" value="F:ATP binding"/>
    <property type="evidence" value="ECO:0007669"/>
    <property type="project" value="UniProtKB-UniRule"/>
</dbReference>
<dbReference type="GO" id="GO:0000287">
    <property type="term" value="F:magnesium ion binding"/>
    <property type="evidence" value="ECO:0007669"/>
    <property type="project" value="InterPro"/>
</dbReference>
<dbReference type="GO" id="GO:0043815">
    <property type="term" value="F:phosphoribosylglycinamide formyltransferase 2 activity"/>
    <property type="evidence" value="ECO:0007669"/>
    <property type="project" value="UniProtKB-UniRule"/>
</dbReference>
<dbReference type="GO" id="GO:0004644">
    <property type="term" value="F:phosphoribosylglycinamide formyltransferase activity"/>
    <property type="evidence" value="ECO:0007669"/>
    <property type="project" value="InterPro"/>
</dbReference>
<dbReference type="GO" id="GO:0006189">
    <property type="term" value="P:'de novo' IMP biosynthetic process"/>
    <property type="evidence" value="ECO:0007669"/>
    <property type="project" value="UniProtKB-UniRule"/>
</dbReference>
<dbReference type="FunFam" id="3.30.1490.20:FF:000013">
    <property type="entry name" value="Formate-dependent phosphoribosylglycinamide formyltransferase"/>
    <property type="match status" value="1"/>
</dbReference>
<dbReference type="FunFam" id="3.30.470.20:FF:000027">
    <property type="entry name" value="Formate-dependent phosphoribosylglycinamide formyltransferase"/>
    <property type="match status" value="1"/>
</dbReference>
<dbReference type="FunFam" id="3.40.50.20:FF:000007">
    <property type="entry name" value="Formate-dependent phosphoribosylglycinamide formyltransferase"/>
    <property type="match status" value="1"/>
</dbReference>
<dbReference type="Gene3D" id="3.40.50.20">
    <property type="match status" value="1"/>
</dbReference>
<dbReference type="Gene3D" id="3.30.1490.20">
    <property type="entry name" value="ATP-grasp fold, A domain"/>
    <property type="match status" value="1"/>
</dbReference>
<dbReference type="Gene3D" id="3.30.470.20">
    <property type="entry name" value="ATP-grasp fold, B domain"/>
    <property type="match status" value="1"/>
</dbReference>
<dbReference type="HAMAP" id="MF_01643">
    <property type="entry name" value="PurT"/>
    <property type="match status" value="1"/>
</dbReference>
<dbReference type="InterPro" id="IPR011761">
    <property type="entry name" value="ATP-grasp"/>
</dbReference>
<dbReference type="InterPro" id="IPR003135">
    <property type="entry name" value="ATP-grasp_carboxylate-amine"/>
</dbReference>
<dbReference type="InterPro" id="IPR013815">
    <property type="entry name" value="ATP_grasp_subdomain_1"/>
</dbReference>
<dbReference type="InterPro" id="IPR016185">
    <property type="entry name" value="PreATP-grasp_dom_sf"/>
</dbReference>
<dbReference type="InterPro" id="IPR005862">
    <property type="entry name" value="PurT"/>
</dbReference>
<dbReference type="InterPro" id="IPR054350">
    <property type="entry name" value="PurT/PurK_preATP-grasp"/>
</dbReference>
<dbReference type="InterPro" id="IPR048740">
    <property type="entry name" value="PurT_C"/>
</dbReference>
<dbReference type="InterPro" id="IPR011054">
    <property type="entry name" value="Rudment_hybrid_motif"/>
</dbReference>
<dbReference type="NCBIfam" id="NF006766">
    <property type="entry name" value="PRK09288.1"/>
    <property type="match status" value="1"/>
</dbReference>
<dbReference type="NCBIfam" id="TIGR01142">
    <property type="entry name" value="purT"/>
    <property type="match status" value="1"/>
</dbReference>
<dbReference type="PANTHER" id="PTHR43055">
    <property type="entry name" value="FORMATE-DEPENDENT PHOSPHORIBOSYLGLYCINAMIDE FORMYLTRANSFERASE"/>
    <property type="match status" value="1"/>
</dbReference>
<dbReference type="PANTHER" id="PTHR43055:SF1">
    <property type="entry name" value="FORMATE-DEPENDENT PHOSPHORIBOSYLGLYCINAMIDE FORMYLTRANSFERASE"/>
    <property type="match status" value="1"/>
</dbReference>
<dbReference type="Pfam" id="PF02222">
    <property type="entry name" value="ATP-grasp"/>
    <property type="match status" value="1"/>
</dbReference>
<dbReference type="Pfam" id="PF21244">
    <property type="entry name" value="PurT_C"/>
    <property type="match status" value="1"/>
</dbReference>
<dbReference type="Pfam" id="PF22660">
    <property type="entry name" value="RS_preATP-grasp-like"/>
    <property type="match status" value="1"/>
</dbReference>
<dbReference type="SUPFAM" id="SSF56059">
    <property type="entry name" value="Glutathione synthetase ATP-binding domain-like"/>
    <property type="match status" value="1"/>
</dbReference>
<dbReference type="SUPFAM" id="SSF52440">
    <property type="entry name" value="PreATP-grasp domain"/>
    <property type="match status" value="1"/>
</dbReference>
<dbReference type="SUPFAM" id="SSF51246">
    <property type="entry name" value="Rudiment single hybrid motif"/>
    <property type="match status" value="1"/>
</dbReference>
<dbReference type="PROSITE" id="PS50975">
    <property type="entry name" value="ATP_GRASP"/>
    <property type="match status" value="1"/>
</dbReference>
<protein>
    <recommendedName>
        <fullName evidence="1">Formate-dependent phosphoribosylglycinamide formyltransferase</fullName>
        <ecNumber evidence="1">6.3.1.21</ecNumber>
    </recommendedName>
    <alternativeName>
        <fullName evidence="1">5'-phosphoribosylglycinamide transformylase 2</fullName>
    </alternativeName>
    <alternativeName>
        <fullName evidence="1">Formate-dependent GAR transformylase</fullName>
    </alternativeName>
    <alternativeName>
        <fullName evidence="1">GAR transformylase 2</fullName>
        <shortName evidence="1">GART 2</shortName>
    </alternativeName>
    <alternativeName>
        <fullName evidence="1">Non-folate glycinamide ribonucleotide transformylase</fullName>
    </alternativeName>
    <alternativeName>
        <fullName evidence="1">Phosphoribosylglycinamide formyltransferase 2</fullName>
    </alternativeName>
</protein>